<sequence length="1256" mass="143622">MLFKLLQRQTYTCLSHRYGLYVCFLGVVVTIVSAFQFGEVVLEWSRDQYHVLFDSYRDNIAGKSFQNRLCLPMPIDVVYTWVNGTDLELLKELQQVREQMEEEQKAMREILGKNTTEPTKKSEKQLECLLTHCIKVPMLVLDPALPANITLKDLPSLYPSFHSASDIFNVAKPKNPSTNVSVVVFDSTKDVEDAHSGLLKGNSRQTVWRGYLTTDKEVPGLVLMQDLAFLSGFPPTFKETNQLKTKLPENLSSKVKLLQLYSEASVALLKLNNPKDFQELNKQTKKNMTIDGKELTISPAYLLWDLSAISQSKQDEDISASRFEDNEELRYSLRSIERHAPWVRNIFIVTNGQIPSWLNLDNPRVTIVTHQDVFRNLSHLPTFSSPAIESHIHRIEGLSQKFIYLNDDVMFGKDVWPDDFYSHSKGQKVYLTWPVPNCAEGCPGSWIKDGYCDKACNNSACDWDGGDCSGNSGGSRYIAGGGGTGSIGVGQPWQFGGGINSVSYCNQGCANSWLADKFCDQACNVLSCGFDAGDCGQDHFHELYKVILLPNQTHYIIPKGECLPYFSFAEVAKRGVEGAYSDNPIIRHASIANKWKTIHLIMHSGMNATTIHFNLTFQNTNDEEFKMQITVEVDTREGPKLNSTAQKGYENLVSPITLLPEAEILFEDIPKEKRFPKFKRHDVNSTRRAQEEVKIPLVNISLLPKDAQLSLNTLDLQLEHGDITLKGYNLSKSALLRSFLMNSQHAKIKNQAIITDETNDSLVAPQEKQVHKSILPNSLGVSERLQRLTFPAVSVKVNGHDQGQNPPLDLETTARFRVETHTQKTIGGNVTKEKPPSLIVPLESQMTKEKKITGKEKENSRMEENAENHIGVTEVLLGRKLQHYTDSYLGFLPWEKKKYFQDLLDEEESLKTQLAYFTDSKNTGRQLKDTFADSLRYVNKILNSKFGFTSRKVPAHMPHMIDRIVMQELQDMFPEEFDKTSFHKVRHSEDMQFAFSYFYYLMSAVQPLNISQVFDEVDTDQSGVLSDREIRTLATRIHELPLSLQDLTGLEHMLINCSKMLPADITQLNNIPPTQESYYDPNLPPVTKSLVTNCKPVTDKIHKAYKDKNKYRFEIMGEEEIAFKMIRTNVSHVVGQLDDIRKNPRKFVCLNDNIDHNHKDAQTVKAVLRDFYESMFPIPSQFELPREYRNRFLHMHELQEWRAYRDKLKFWTHCVLATLIMFTIFSFFAEQLIALKRKIFPRRRIHKEASPNRIRV</sequence>
<evidence type="ECO:0000255" key="1"/>
<evidence type="ECO:0000255" key="2">
    <source>
        <dbReference type="PROSITE-ProRule" id="PRU00448"/>
    </source>
</evidence>
<evidence type="ECO:0000255" key="3">
    <source>
        <dbReference type="PROSITE-ProRule" id="PRU00525"/>
    </source>
</evidence>
<evidence type="ECO:0000255" key="4">
    <source>
        <dbReference type="PROSITE-ProRule" id="PRU01260"/>
    </source>
</evidence>
<evidence type="ECO:0000269" key="5">
    <source>
    </source>
</evidence>
<evidence type="ECO:0000269" key="6">
    <source>
    </source>
</evidence>
<evidence type="ECO:0000269" key="7">
    <source>
    </source>
</evidence>
<evidence type="ECO:0000269" key="8">
    <source>
    </source>
</evidence>
<evidence type="ECO:0000269" key="9">
    <source>
    </source>
</evidence>
<evidence type="ECO:0000269" key="10">
    <source>
    </source>
</evidence>
<evidence type="ECO:0000269" key="11">
    <source>
    </source>
</evidence>
<evidence type="ECO:0000269" key="12">
    <source>
    </source>
</evidence>
<evidence type="ECO:0000269" key="13">
    <source>
    </source>
</evidence>
<evidence type="ECO:0000269" key="14">
    <source>
    </source>
</evidence>
<evidence type="ECO:0000269" key="15">
    <source>
    </source>
</evidence>
<evidence type="ECO:0000269" key="16">
    <source>
    </source>
</evidence>
<evidence type="ECO:0000269" key="17">
    <source>
    </source>
</evidence>
<evidence type="ECO:0000269" key="18">
    <source>
    </source>
</evidence>
<evidence type="ECO:0000269" key="19">
    <source>
    </source>
</evidence>
<evidence type="ECO:0000269" key="20">
    <source>
    </source>
</evidence>
<evidence type="ECO:0000269" key="21">
    <source>
    </source>
</evidence>
<evidence type="ECO:0000269" key="22">
    <source>
    </source>
</evidence>
<evidence type="ECO:0000269" key="23">
    <source>
    </source>
</evidence>
<evidence type="ECO:0000269" key="24">
    <source>
    </source>
</evidence>
<evidence type="ECO:0000269" key="25">
    <source>
    </source>
</evidence>
<evidence type="ECO:0000269" key="26">
    <source>
    </source>
</evidence>
<evidence type="ECO:0000269" key="27">
    <source>
    </source>
</evidence>
<evidence type="ECO:0000269" key="28">
    <source>
    </source>
</evidence>
<evidence type="ECO:0000269" key="29">
    <source>
    </source>
</evidence>
<evidence type="ECO:0000269" key="30">
    <source>
    </source>
</evidence>
<evidence type="ECO:0000269" key="31">
    <source>
    </source>
</evidence>
<evidence type="ECO:0000269" key="32">
    <source>
    </source>
</evidence>
<evidence type="ECO:0000269" key="33">
    <source>
    </source>
</evidence>
<evidence type="ECO:0000303" key="34">
    <source>
    </source>
</evidence>
<evidence type="ECO:0000305" key="35"/>
<evidence type="ECO:0007829" key="36">
    <source>
        <dbReference type="PDB" id="2N6D"/>
    </source>
</evidence>
<evidence type="ECO:0007829" key="37">
    <source>
        <dbReference type="PDB" id="7S05"/>
    </source>
</evidence>
<evidence type="ECO:0007829" key="38">
    <source>
        <dbReference type="PDB" id="7S06"/>
    </source>
</evidence>
<proteinExistence type="evidence at protein level"/>
<name>GNPTA_HUMAN</name>
<feature type="chain" id="PRO_0000225008" description="N-acetylglucosamine-1-phosphotransferase subunit alpha">
    <location>
        <begin position="1"/>
        <end position="928"/>
    </location>
</feature>
<feature type="chain" id="PRO_0000225009" description="N-acetylglucosamine-1-phosphotransferase subunit beta">
    <location>
        <begin position="929"/>
        <end position="1256"/>
    </location>
</feature>
<feature type="transmembrane region" description="Helical" evidence="1">
    <location>
        <begin position="22"/>
        <end position="42"/>
    </location>
</feature>
<feature type="transmembrane region" description="Helical" evidence="1">
    <location>
        <begin position="1215"/>
        <end position="1235"/>
    </location>
</feature>
<feature type="repeat" description="LNR 1">
    <location>
        <begin position="438"/>
        <end position="473"/>
    </location>
</feature>
<feature type="repeat" description="LNR 2">
    <location>
        <begin position="505"/>
        <end position="545"/>
    </location>
</feature>
<feature type="domain" description="DMAP1-binding" evidence="4">
    <location>
        <begin position="699"/>
        <end position="798"/>
    </location>
</feature>
<feature type="domain" description="EF-hand" evidence="2">
    <location>
        <begin position="1005"/>
        <end position="1040"/>
    </location>
</feature>
<feature type="binding site" evidence="3">
    <location>
        <position position="449"/>
    </location>
    <ligand>
        <name>Ca(2+)</name>
        <dbReference type="ChEBI" id="CHEBI:29108"/>
    </ligand>
</feature>
<feature type="binding site" evidence="3">
    <location>
        <position position="464"/>
    </location>
    <ligand>
        <name>Ca(2+)</name>
        <dbReference type="ChEBI" id="CHEBI:29108"/>
    </ligand>
</feature>
<feature type="binding site" evidence="3">
    <location>
        <position position="467"/>
    </location>
    <ligand>
        <name>Ca(2+)</name>
        <dbReference type="ChEBI" id="CHEBI:29108"/>
    </ligand>
</feature>
<feature type="binding site" evidence="3">
    <location>
        <position position="516"/>
    </location>
    <ligand>
        <name>Ca(2+)</name>
        <dbReference type="ChEBI" id="CHEBI:29108"/>
    </ligand>
</feature>
<feature type="binding site" evidence="3">
    <location>
        <position position="531"/>
    </location>
    <ligand>
        <name>Ca(2+)</name>
        <dbReference type="ChEBI" id="CHEBI:29108"/>
    </ligand>
</feature>
<feature type="binding site" evidence="3">
    <location>
        <position position="534"/>
    </location>
    <ligand>
        <name>Ca(2+)</name>
        <dbReference type="ChEBI" id="CHEBI:29108"/>
    </ligand>
</feature>
<feature type="binding site" evidence="2">
    <location>
        <position position="1018"/>
    </location>
    <ligand>
        <name>Ca(2+)</name>
        <dbReference type="ChEBI" id="CHEBI:29108"/>
    </ligand>
</feature>
<feature type="binding site" evidence="2">
    <location>
        <position position="1020"/>
    </location>
    <ligand>
        <name>Ca(2+)</name>
        <dbReference type="ChEBI" id="CHEBI:29108"/>
    </ligand>
</feature>
<feature type="binding site" evidence="2">
    <location>
        <position position="1022"/>
    </location>
    <ligand>
        <name>Ca(2+)</name>
        <dbReference type="ChEBI" id="CHEBI:29108"/>
    </ligand>
</feature>
<feature type="binding site" evidence="2">
    <location>
        <position position="1029"/>
    </location>
    <ligand>
        <name>Ca(2+)</name>
        <dbReference type="ChEBI" id="CHEBI:29108"/>
    </ligand>
</feature>
<feature type="site" description="Cleavage; by MBTPS1">
    <location>
        <begin position="928"/>
        <end position="929"/>
    </location>
</feature>
<feature type="glycosylation site" description="N-linked (GlcNAc...) asparagine" evidence="1">
    <location>
        <position position="83"/>
    </location>
</feature>
<feature type="glycosylation site" description="N-linked (GlcNAc...) asparagine" evidence="1">
    <location>
        <position position="114"/>
    </location>
</feature>
<feature type="glycosylation site" description="N-linked (GlcNAc...) asparagine" evidence="1">
    <location>
        <position position="148"/>
    </location>
</feature>
<feature type="glycosylation site" description="N-linked (GlcNAc...) asparagine" evidence="1">
    <location>
        <position position="179"/>
    </location>
</feature>
<feature type="glycosylation site" description="N-linked (GlcNAc...) asparagine" evidence="1">
    <location>
        <position position="250"/>
    </location>
</feature>
<feature type="glycosylation site" description="N-linked (GlcNAc...) asparagine" evidence="1">
    <location>
        <position position="614"/>
    </location>
</feature>
<feature type="glycosylation site" description="N-linked (GlcNAc...) asparagine" evidence="12">
    <location>
        <position position="699"/>
    </location>
</feature>
<feature type="glycosylation site" description="N-linked (GlcNAc...) asparagine" evidence="1">
    <location>
        <position position="729"/>
    </location>
</feature>
<feature type="glycosylation site" description="N-linked (GlcNAc...) asparagine" evidence="1">
    <location>
        <position position="829"/>
    </location>
</feature>
<feature type="glycosylation site" description="N-linked (GlcNAc...) asparagine" evidence="1">
    <location>
        <position position="1009"/>
    </location>
</feature>
<feature type="glycosylation site" description="N-linked (GlcNAc...) asparagine" evidence="1">
    <location>
        <position position="1129"/>
    </location>
</feature>
<feature type="disulfide bond" evidence="3">
    <location>
        <begin position="438"/>
        <end position="461"/>
    </location>
</feature>
<feature type="disulfide bond" evidence="3">
    <location>
        <begin position="452"/>
        <end position="468"/>
    </location>
</feature>
<feature type="disulfide bond" evidence="3">
    <location>
        <begin position="505"/>
        <end position="528"/>
    </location>
</feature>
<feature type="disulfide bond" evidence="3">
    <location>
        <begin position="519"/>
        <end position="535"/>
    </location>
</feature>
<feature type="splice variant" id="VSP_017338" description="In isoform 2." evidence="34">
    <original>NSGGSRYIAGGGGTGSIGVG</original>
    <variation>KDVLNCNSFIFMEYFLLNHY</variation>
    <location>
        <begin position="471"/>
        <end position="490"/>
    </location>
</feature>
<feature type="splice variant" id="VSP_017339" description="In isoform 2." evidence="34">
    <location>
        <begin position="491"/>
        <end position="1256"/>
    </location>
</feature>
<feature type="sequence variant" id="VAR_027509" description="In MLIIIA; also found in patients with intermediate phenotype between MLII and MLIIIA; no effect on protein abundance; decreased retention in the Golgi; mistargeted to lysosomes and plasma membrane; decreased UDP-N-acetylglucosamine-lysosomal-enzyme N-acetylglucosaminephosphotransferase activity; dbSNP:rs34159654." evidence="8 14 16 24 26 29">
    <original>K</original>
    <variation>Q</variation>
    <location>
        <position position="4"/>
    </location>
</feature>
<feature type="sequence variant" id="VAR_073124" description="In MLIIIA; uncertain significance; no effect on protein abundance; decreased protein cleavage into alpha and beta subunits; decreased retention in the Golgi; mistargeted to lysosomes and plasma membrane; decreased UDP-N-acetylglucosamine-lysosomal-enzyme N-acetylglucosaminephosphotransferase activity; dbSNP:rs281864947." evidence="14 26 29">
    <original>S</original>
    <variation>Y</variation>
    <location>
        <position position="15"/>
    </location>
</feature>
<feature type="sequence variant" id="VAR_079713" description="In MLII; loss of Golgi localization; defects in protein cleavage into alpha and beta subunits; loss of UDP-N-acetylglucosamine-lysosomal-enzyme N-acetylglucosaminephosphotransferase activity." evidence="32">
    <original>D</original>
    <variation>G</variation>
    <location>
        <position position="76"/>
    </location>
</feature>
<feature type="sequence variant" id="VAR_070831" description="In MLII and MLIIIA; no effect on protein abundance; decreased localization to the Golgi; defects in protein cleavage into alpha and beta subunits; loss of UDP-N-acetylglucosamine-lysosomal-enzyme N-acetylglucosaminephosphotransferase activity; dbSNP:rs281864953." evidence="21 25 29 32">
    <original>W</original>
    <variation>L</variation>
    <location>
        <position position="81"/>
    </location>
</feature>
<feature type="sequence variant" id="VAR_073125" description="In MLII; uncertain significance; decreased localization to the Golgi; decreased UDP-N-acetylglucosamine-lysosomal-enzyme N-acetylglucosaminephosphotransferase activity; dbSNP:rs281864958." evidence="16 29">
    <original>V</original>
    <variation>D</variation>
    <location>
        <position position="182"/>
    </location>
</feature>
<feature type="sequence variant" id="VAR_053545" description="In MLIIIA; also found in patients with intermediate phenotype between MLII and MLIIIA; uncertain significance; no effect on protein abundance; no effect on localization to the Golgi; no effect on protein cleavage into alpha and beta subunits; decreased UDP-N-acetylglucosamine-lysosomal-enzyme N-acetylglucosaminephosphotransferase activity; dbSNP:rs34946266." evidence="14">
    <original>D</original>
    <variation>V</variation>
    <location>
        <position position="190"/>
    </location>
</feature>
<feature type="sequence variant" id="VAR_073126" description="In MLII; uncertain significance; dbSNP:rs281864959." evidence="16">
    <original>Q</original>
    <variation>P</variation>
    <location>
        <position position="205"/>
    </location>
</feature>
<feature type="sequence variant" id="VAR_079714" description="In MLIIIA." evidence="32">
    <location>
        <begin position="278"/>
        <end position="1256"/>
    </location>
</feature>
<feature type="sequence variant" id="VAR_073127" description="In MLII; no effect on protein abundance; loss of localization to the Golgi; loss of protein cleavage into alpha and beta subunits; loss of UDP-N-acetylglucosamine-lysosomal-enzyme N-acetylglucosaminephosphotransferase activity; dbSNP:rs281864970." evidence="13 29">
    <original>R</original>
    <variation>L</variation>
    <location>
        <position position="334"/>
    </location>
</feature>
<feature type="sequence variant" id="VAR_073128" description="In MLIIIA; no effect on protein abundance; loss of localization to the Golgi; loss of protein cleavage into alpha and beta subunits; loss of UDP-N-acetylglucosamine-lysosomal-enzyme N-acetylglucosaminephosphotransferase activity; dbSNP:rs281864970." evidence="14 29">
    <original>R</original>
    <variation>Q</variation>
    <location>
        <position position="334"/>
    </location>
</feature>
<feature type="sequence variant" id="VAR_027510" description="In MLII; uncertain significance; no effect on protein abundance; no effect on localization to the Golgi; no effect on protein cleavage into alpha and beta subunits; decreased UDP-N-acetylglucosamine-lysosomal-enzyme N-acetylglucosaminephosphotransferase activity; dbSNP:rs7958709." evidence="14 29">
    <original>I</original>
    <variation>L</variation>
    <location>
        <position position="348"/>
    </location>
</feature>
<feature type="sequence variant" id="VAR_062807" description="In MLII and MLIIIA; no effect on protein abundance; no effect on localization to the Golgi; loss of UDP-N-acetylglucosamine-lysosomal-enzyme N-acetylglucosaminephosphotransferase activity; dbSNP:rs137852900." evidence="13 29">
    <original>F</original>
    <variation>L</variation>
    <location>
        <position position="374"/>
    </location>
</feature>
<feature type="sequence variant" id="VAR_079715" description="In MLII; no loss of Golgi localization; no defects in protein cleavage into alpha and beta subunits; loss of UDP-N-acetylglucosamine-lysosomal-enzyme N-acetylglucosaminephosphotransferase activity." evidence="32">
    <original>S</original>
    <variation>L</variation>
    <location>
        <position position="385"/>
    </location>
</feature>
<feature type="sequence variant" id="VAR_062808" description="In MLIIIA; no effect on protein abundance; loss of localization to the Golgi; defects in protein cleavage into alpha and beta subunits; decreased UDP-N-acetylglucosamine-lysosomal-enzyme N-acetylglucosaminephosphotransferase activity; dbSNP:rs281865026." evidence="9 14 21 25 29 30">
    <original>S</original>
    <variation>F</variation>
    <location>
        <position position="399"/>
    </location>
</feature>
<feature type="sequence variant" id="VAR_062809" description="In MLIIIA; loss of localization to the Golgi; loss of protein cleavage into alpha and beta subunits; decreased UDP-N-acetylglucosamine-lysosomal-enzyme N-acetylglucosaminephosphotransferase activity; dbSNP:rs281864973." evidence="15 21 29 30 32">
    <original>I</original>
    <variation>T</variation>
    <location>
        <position position="403"/>
    </location>
</feature>
<feature type="sequence variant" id="VAR_025416" description="In MLIIIA; no effect on protein abundance; no effect on localization to the Golgi; no effect on protein cleavage into alpha and beta subunits; decreased UDP-N-acetylglucosamine-lysosomal-enzyme N-acetylglucosaminephosphotransferase activity; dbSNP:rs137852895." evidence="5 29">
    <original>D</original>
    <variation>A</variation>
    <location>
        <position position="407"/>
    </location>
</feature>
<feature type="sequence variant" id="VAR_062810" description="In MLIIIA; no effect on localization to the Golgi; no effect on protein cleavage into alpha and beta subunits; loss of UDP-N-acetylglucosamine-lysosomal-enzyme N-acetylglucosaminephosphotransferase activity toward some substrates; dbSNP:rs281864975." evidence="15 29">
    <original>C</original>
    <variation>Y</variation>
    <location>
        <position position="442"/>
    </location>
</feature>
<feature type="sequence variant" id="VAR_073219" description="Rare variant; found in individuals suffering from stuttering; uncertain significance; dbSNP:rs137853822." evidence="18">
    <original>A</original>
    <variation>S</variation>
    <location>
        <position position="455"/>
    </location>
</feature>
<feature type="sequence variant" id="VAR_062811" description="In MLIIIA; no effect on protein abundance; no effect on localization to the Golgi; no effect on protein cleavage into alpha and beta subunits; loss of UDP-N-acetylglucosamine-lysosomal-enzyme N-acetylglucosaminephosphotransferase activity toward some substrates; dbSNP:rs281864977." evidence="15 29">
    <original>C</original>
    <variation>G</variation>
    <location>
        <position position="461"/>
    </location>
</feature>
<feature type="sequence variant" id="VAR_073129" description="In MLIIIA; patients with intermediate phenotype between MLII and MLIIIA; no effect on protein abundance; no effect on localization to the Golgi; no effect on protein cleavage into alpha and beta subunits; loss of UDP-N-acetylglucosamine-lysosomal-enzyme N-acetylglucosaminephosphotransferase activity toward some substrates; dbSNP:rs281864979." evidence="14 29">
    <original>C</original>
    <variation>S</variation>
    <location>
        <position position="468"/>
    </location>
</feature>
<feature type="sequence variant" id="VAR_070832" description="In MLIIIA; uncertain significance; decreased localization to the Golgi; decreased protein cleavage into alpha and beta subunits; decreased UDP-N-acetylglucosamine-lysosomal-enzyme N-acetylglucosaminephosphotransferase activity; reduces protein abundance; dbSNP:rs281864980." evidence="14 21 29 30 32">
    <original>C</original>
    <variation>Y</variation>
    <location>
        <position position="505"/>
    </location>
</feature>
<feature type="sequence variant" id="VAR_073130" description="Found in a patient with mucolipidosis type II or III; uncertain significance; decreased localization to the Golgi; decreased protein cleavage into alpha and beta subunits; decreased UDP-N-acetylglucosamine-lysosomal-enzyme N-acetylglucosaminephosphotransferase activity; dbSNP:rs2137119014." evidence="28 29">
    <original>C</original>
    <variation>R</variation>
    <location>
        <position position="523"/>
    </location>
</feature>
<feature type="sequence variant" id="VAR_074206" description="In MLIIIA; significantly reduces protein cleavage into alpha and beta subunits; reduces protein abundance; significantly decreased localization to the Golgi; significantly reduces UDP-N-acetylglucosamine-lysosomal-enzyme N-acetylglucosaminephosphotransferase." evidence="30">
    <original>G</original>
    <variation>R</variation>
    <location>
        <position position="575"/>
    </location>
</feature>
<feature type="sequence variant" id="VAR_073131" description="In MLIIIA; decreased localization to the Golgi; decreased UDP-N-acetylglucosamine-lysosomal-enzyme N-acetylglucosaminephosphotransferase activity; dbSNP:rs143788461." evidence="11 29">
    <original>R</original>
    <variation>P</variation>
    <location>
        <position position="587"/>
    </location>
</feature>
<feature type="sequence variant" id="VAR_073132" description="Found in a patient with mucolipidosis type II or III; uncertain significance; decreased localization to the Golgi; decreased UDP-N-acetylglucosamine-lysosomal-enzyme N-acetylglucosaminephosphotransferase activity; dbSNP:rs149390820." evidence="27 29">
    <original>A</original>
    <variation>T</variation>
    <location>
        <position position="592"/>
    </location>
</feature>
<feature type="sequence variant" id="VAR_073220" description="Rare variant; found in individuals suffering from stuttering; uncertain significance; dbSNP:rs137853823." evidence="18">
    <original>F</original>
    <variation>L</variation>
    <location>
        <position position="625"/>
    </location>
</feature>
<feature type="sequence variant" id="VAR_074207" description="In MLIIIA; reduces protein cleavage into alpha and beta subunits; reduces protein abundance; no effect on subcellular location in Golgi apparatus; mildly affects UDP-N-acetylglucosamine-lysosomal-enzyme N-acetylglucosaminephosphotransferase; dbSNP:rs386765812." evidence="30">
    <original>T</original>
    <variation>M</variation>
    <location>
        <position position="644"/>
    </location>
</feature>
<feature type="sequence variant" id="VAR_025417" description="In dbSNP:rs142172397." evidence="5">
    <original>A</original>
    <variation>G</variation>
    <location>
        <position position="662"/>
    </location>
</feature>
<feature type="sequence variant" id="VAR_070833" description="In MLII; no effect on localization to the Golgi; loss of UDP-N-acetylglucosamine-lysosomal-enzyme N-acetylglucosaminephosphotransferase activity toward some substrates; dbSNP:rs281864989." evidence="16 22 29">
    <original>K</original>
    <variation>N</variation>
    <location>
        <position position="732"/>
    </location>
</feature>
<feature type="sequence variant" id="VAR_073133" description="Found in a patient with mucolipidosis type II or III; uncertain significance; no effect on localization to the Golgi; loss of UDP-N-acetylglucosamine-lysosomal-enzyme N-acetylglucosaminephosphotransferase activity toward some substrates; dbSNP:rs144060383." evidence="27 29">
    <original>L</original>
    <variation>W</variation>
    <location>
        <position position="785"/>
    </location>
</feature>
<feature type="sequence variant" id="VAR_062812" description="In MLIIIA; no effect on localization to the Golgi; loss of protein cleavage into alpha and beta subunits; loss of UDP-N-acetylglucosamine-lysosomal-enzyme N-acetylglucosaminephosphotransferase activity; dbSNP:rs281865002." evidence="15 29">
    <original>Q</original>
    <variation>P</variation>
    <location>
        <position position="926"/>
    </location>
</feature>
<feature type="sequence variant" id="VAR_073134" description="In MLII; uncertain significance; dbSNP:rs281865003." evidence="16">
    <original>K</original>
    <variation>R</variation>
    <location>
        <position position="928"/>
    </location>
</feature>
<feature type="sequence variant" id="VAR_074208" description="In MLII; abnormal protein cleavage into alpha and beta subunits; no effect on protein abundance; significantly decreased localization to the Golgi; loss of UDP-N-acetylglucosamine-lysosomal-enzyme N-acetylglucosaminephosphotransferase." evidence="30">
    <location>
        <begin position="937"/>
        <end position="972"/>
    </location>
</feature>
<feature type="sequence variant" id="VAR_073135" description="In MLII; uncertain significance; no effect on protein abundance; no effect on localization to the Golgi; decreased UDP-N-acetylglucosamine-lysosomal-enzyme N-acetylglucosaminephosphotransferase activity; dbSNP:rs138390866." evidence="16 29">
    <original>A</original>
    <variation>V</variation>
    <location>
        <position position="955"/>
    </location>
</feature>
<feature type="sequence variant" id="VAR_073136" description="In MLIIIA; uncertain significance; dbSNP:rs281865005." evidence="14">
    <original>H</original>
    <variation>R</variation>
    <location>
        <position position="956"/>
    </location>
</feature>
<feature type="sequence variant" id="VAR_062813" description="In MLIIIA; no effect on protein abundance; no effect on localization to the Golgi; dbSNP:rs281865004." evidence="13 29">
    <original>H</original>
    <variation>Y</variation>
    <location>
        <position position="956"/>
    </location>
</feature>
<feature type="sequence variant" id="VAR_070834" description="In MLII; decreased protein abundance; no effect on localization to the Golgi; no effect on protein cleavage into alpha and beta subunits; loss of UDP-N-acetylglucosamine-lysosomal-enzyme N-acetylglucosaminephosphotransferase activity; dbSNP:rs769587233." evidence="20 25 28 29">
    <original>R</original>
    <variation>C</variation>
    <location>
        <position position="986"/>
    </location>
</feature>
<feature type="sequence variant" id="VAR_062814" description="In MLII; no effect on protein abundance; decreased localization to the Golgi; decreased UDP-N-acetylglucosamine-lysosomal-enzyme N-acetylglucosaminephosphotransferase activity; dbSNP:rs281865006." evidence="15 29">
    <original>L</original>
    <variation>P</variation>
    <location>
        <position position="1001"/>
    </location>
</feature>
<feature type="sequence variant" id="VAR_073137" description="In MLIIIA; uncertain significance; patients with intermediate phenotype between MLII and MLIIIA; no effect on protein abundance; decreased localization to the Golgi; loss of UDP-N-acetylglucosamine-lysosomal-enzyme N-acetylglucosaminephosphotransferase activity; dbSNP:rs281865007." evidence="14 29">
    <original>D</original>
    <variation>G</variation>
    <location>
        <position position="1018"/>
    </location>
</feature>
<feature type="sequence variant" id="VAR_073138" description="In MLII; uncertain significance; no effect on localization to the Golgi; decreased UDP-N-acetylglucosamine-lysosomal-enzyme N-acetylglucosaminephosphotransferase activity; dbSNP:rs281865010." evidence="16 29">
    <original>L</original>
    <variation>V</variation>
    <location>
        <position position="1054"/>
    </location>
</feature>
<feature type="sequence variant" id="VAR_079716" description="In MLII." evidence="32">
    <location>
        <begin position="1111"/>
        <end position="1256"/>
    </location>
</feature>
<feature type="sequence variant" id="VAR_062815" description="In MLIIIA; no effect on protein abundance; no effect on localization to the Golgi; loss of UDP-N-acetylglucosamine-lysosomal-enzyme N-acetylglucosaminephosphotransferase activity; dbSNP:rs281865019." evidence="13 29">
    <original>N</original>
    <variation>S</variation>
    <location>
        <position position="1153"/>
    </location>
</feature>
<feature type="sequence variant" id="VAR_073221" description="May be a risk factor for stuttering; dbSNP:rs137853825." evidence="18 31">
    <original>E</original>
    <variation>K</variation>
    <location>
        <position position="1200"/>
    </location>
</feature>
<feature type="sequence variant" id="VAR_074209" description="In MLIIIA; no effect on protein cleavage into alpha and beta subunits; no effect on protein abundance; no effect on subcellular location in cis-Golgi apparatus; slightly affects UDP-N-acetylglucosamine-lysosomal-enzyme N-acetylglucosaminephosphotransferase activity." evidence="30">
    <location>
        <position position="1223"/>
    </location>
</feature>
<feature type="sequence variant" id="VAR_027511" description="In MLII; decreased protein abundance; no effect on localization to the Golgi; does not suppress protein cleavage into alpha and beta subunits; decreased UDP-N-acetylglucosamine-lysosomal-enzyme N-acetylglucosaminephosphotransferase activity." evidence="10 25 29">
    <original>K</original>
    <variation>M</variation>
    <location>
        <position position="1236"/>
    </location>
</feature>
<feature type="mutagenesis site" description="Partially cleaved by MBTPS1." evidence="30">
    <original>I</original>
    <variation>A</variation>
    <location>
        <position position="346"/>
    </location>
</feature>
<feature type="mutagenesis site" description="Abolishes proteolytic cleavage by MBTPS1." evidence="30">
    <original>W</original>
    <variation>A</variation>
    <location>
        <position position="357"/>
    </location>
</feature>
<feature type="mutagenesis site" description="Abolishes proteolytic cleavage by MBTPS1." evidence="19">
    <original>R</original>
    <variation>A</variation>
    <location>
        <position position="925"/>
    </location>
</feature>
<feature type="mutagenesis site" description="Abolishes proteolytic cleavage by MBTPS1." evidence="19">
    <original>L</original>
    <variation>A</variation>
    <location>
        <position position="927"/>
    </location>
</feature>
<feature type="mutagenesis site" description="Abolishes proteolytic cleavage by MBTPS1." evidence="19">
    <original>K</original>
    <variation>A</variation>
    <location>
        <position position="928"/>
    </location>
</feature>
<feature type="sequence conflict" description="In Ref. 2; AAV98624." evidence="35" ref="2">
    <original>I</original>
    <variation>V</variation>
    <location>
        <position position="392"/>
    </location>
</feature>
<feature type="sequence conflict" description="In Ref. 2; AAV98624." evidence="35" ref="2">
    <original>Q</original>
    <variation>L</variation>
    <location>
        <position position="901"/>
    </location>
</feature>
<feature type="helix" evidence="37">
    <location>
        <begin position="50"/>
        <end position="54"/>
    </location>
</feature>
<feature type="turn" evidence="37">
    <location>
        <begin position="55"/>
        <end position="57"/>
    </location>
</feature>
<feature type="strand" evidence="37">
    <location>
        <begin position="59"/>
        <end position="61"/>
    </location>
</feature>
<feature type="helix" evidence="37">
    <location>
        <begin position="66"/>
        <end position="69"/>
    </location>
</feature>
<feature type="strand" evidence="37">
    <location>
        <begin position="75"/>
        <end position="80"/>
    </location>
</feature>
<feature type="helix" evidence="37">
    <location>
        <begin position="86"/>
        <end position="110"/>
    </location>
</feature>
<feature type="strand" evidence="36">
    <location>
        <begin position="138"/>
        <end position="141"/>
    </location>
</feature>
<feature type="turn" evidence="36">
    <location>
        <begin position="151"/>
        <end position="153"/>
    </location>
</feature>
<feature type="turn" evidence="36">
    <location>
        <begin position="155"/>
        <end position="157"/>
    </location>
</feature>
<feature type="helix" evidence="36">
    <location>
        <begin position="159"/>
        <end position="161"/>
    </location>
</feature>
<feature type="strand" evidence="36">
    <location>
        <begin position="165"/>
        <end position="172"/>
    </location>
</feature>
<feature type="strand" evidence="36">
    <location>
        <begin position="175"/>
        <end position="184"/>
    </location>
</feature>
<feature type="helix" evidence="36">
    <location>
        <begin position="188"/>
        <end position="196"/>
    </location>
</feature>
<feature type="strand" evidence="36">
    <location>
        <begin position="207"/>
        <end position="210"/>
    </location>
</feature>
<feature type="strand" evidence="36">
    <location>
        <begin position="225"/>
        <end position="231"/>
    </location>
</feature>
<feature type="helix" evidence="36">
    <location>
        <begin position="240"/>
        <end position="244"/>
    </location>
</feature>
<feature type="helix" evidence="36">
    <location>
        <begin position="249"/>
        <end position="251"/>
    </location>
</feature>
<feature type="strand" evidence="36">
    <location>
        <begin position="252"/>
        <end position="256"/>
    </location>
</feature>
<feature type="strand" evidence="36">
    <location>
        <begin position="262"/>
        <end position="265"/>
    </location>
</feature>
<feature type="strand" evidence="36">
    <location>
        <begin position="267"/>
        <end position="272"/>
    </location>
</feature>
<feature type="helix" evidence="36">
    <location>
        <begin position="274"/>
        <end position="280"/>
    </location>
</feature>
<feature type="helix" evidence="37">
    <location>
        <begin position="328"/>
        <end position="339"/>
    </location>
</feature>
<feature type="strand" evidence="37">
    <location>
        <begin position="346"/>
        <end position="349"/>
    </location>
</feature>
<feature type="strand" evidence="38">
    <location>
        <begin position="356"/>
        <end position="358"/>
    </location>
</feature>
<feature type="strand" evidence="37">
    <location>
        <begin position="365"/>
        <end position="368"/>
    </location>
</feature>
<feature type="helix" evidence="37">
    <location>
        <begin position="370"/>
        <end position="373"/>
    </location>
</feature>
<feature type="helix" evidence="38">
    <location>
        <begin position="377"/>
        <end position="379"/>
    </location>
</feature>
<feature type="helix" evidence="37">
    <location>
        <begin position="385"/>
        <end position="390"/>
    </location>
</feature>
<feature type="helix" evidence="37">
    <location>
        <begin position="391"/>
        <end position="394"/>
    </location>
</feature>
<feature type="strand" evidence="37">
    <location>
        <begin position="400"/>
        <end position="405"/>
    </location>
</feature>
<feature type="strand" evidence="37">
    <location>
        <begin position="407"/>
        <end position="411"/>
    </location>
</feature>
<feature type="helix" evidence="37">
    <location>
        <begin position="417"/>
        <end position="419"/>
    </location>
</feature>
<feature type="turn" evidence="37">
    <location>
        <begin position="423"/>
        <end position="425"/>
    </location>
</feature>
<feature type="strand" evidence="37">
    <location>
        <begin position="426"/>
        <end position="434"/>
    </location>
</feature>
<feature type="helix" evidence="38">
    <location>
        <begin position="904"/>
        <end position="912"/>
    </location>
</feature>
<feature type="strand" evidence="38">
    <location>
        <begin position="915"/>
        <end position="919"/>
    </location>
</feature>
<feature type="helix" evidence="38">
    <location>
        <begin position="920"/>
        <end position="922"/>
    </location>
</feature>
<feature type="helix" evidence="37">
    <location>
        <begin position="932"/>
        <end position="946"/>
    </location>
</feature>
<feature type="strand" evidence="37">
    <location>
        <begin position="952"/>
        <end position="954"/>
    </location>
</feature>
<feature type="strand" evidence="37">
    <location>
        <begin position="959"/>
        <end position="962"/>
    </location>
</feature>
<feature type="helix" evidence="37">
    <location>
        <begin position="963"/>
        <end position="972"/>
    </location>
</feature>
<feature type="helix" evidence="37">
    <location>
        <begin position="974"/>
        <end position="982"/>
    </location>
</feature>
<feature type="helix" evidence="37">
    <location>
        <begin position="994"/>
        <end position="1002"/>
    </location>
</feature>
<feature type="helix" evidence="37">
    <location>
        <begin position="1010"/>
        <end position="1017"/>
    </location>
</feature>
<feature type="strand" evidence="37">
    <location>
        <begin position="1022"/>
        <end position="1025"/>
    </location>
</feature>
<feature type="helix" evidence="37">
    <location>
        <begin position="1027"/>
        <end position="1037"/>
    </location>
</feature>
<feature type="helix" evidence="37">
    <location>
        <begin position="1044"/>
        <end position="1060"/>
    </location>
</feature>
<feature type="helix" evidence="37">
    <location>
        <begin position="1088"/>
        <end position="1093"/>
    </location>
</feature>
<feature type="helix" evidence="37">
    <location>
        <begin position="1095"/>
        <end position="1104"/>
    </location>
</feature>
<feature type="strand" evidence="37">
    <location>
        <begin position="1108"/>
        <end position="1111"/>
    </location>
</feature>
<feature type="strand" evidence="37">
    <location>
        <begin position="1113"/>
        <end position="1116"/>
    </location>
</feature>
<feature type="strand" evidence="37">
    <location>
        <begin position="1118"/>
        <end position="1125"/>
    </location>
</feature>
<feature type="helix" evidence="37">
    <location>
        <begin position="1130"/>
        <end position="1142"/>
    </location>
</feature>
<feature type="strand" evidence="37">
    <location>
        <begin position="1146"/>
        <end position="1151"/>
    </location>
</feature>
<feature type="strand" evidence="37">
    <location>
        <begin position="1156"/>
        <end position="1158"/>
    </location>
</feature>
<feature type="helix" evidence="37">
    <location>
        <begin position="1162"/>
        <end position="1175"/>
    </location>
</feature>
<feature type="helix" evidence="37">
    <location>
        <begin position="1196"/>
        <end position="1203"/>
    </location>
</feature>
<keyword id="KW-0002">3D-structure</keyword>
<keyword id="KW-0025">Alternative splicing</keyword>
<keyword id="KW-0106">Calcium</keyword>
<keyword id="KW-0225">Disease variant</keyword>
<keyword id="KW-1015">Disulfide bond</keyword>
<keyword id="KW-0325">Glycoprotein</keyword>
<keyword id="KW-0333">Golgi apparatus</keyword>
<keyword id="KW-0472">Membrane</keyword>
<keyword id="KW-0479">Metal-binding</keyword>
<keyword id="KW-0942">Mucolipidosis</keyword>
<keyword id="KW-1267">Proteomics identification</keyword>
<keyword id="KW-1185">Reference proteome</keyword>
<keyword id="KW-0677">Repeat</keyword>
<keyword id="KW-0735">Signal-anchor</keyword>
<keyword id="KW-0808">Transferase</keyword>
<keyword id="KW-0812">Transmembrane</keyword>
<keyword id="KW-1133">Transmembrane helix</keyword>
<protein>
    <recommendedName>
        <fullName>N-acetylglucosamine-1-phosphotransferase subunits alpha/beta</fullName>
        <ecNumber evidence="17">2.7.8.17</ecNumber>
    </recommendedName>
    <alternativeName>
        <fullName>GlcNAc-1-phosphotransferase subunits alpha/beta</fullName>
    </alternativeName>
    <alternativeName>
        <fullName>Stealth protein GNPTAB</fullName>
    </alternativeName>
    <alternativeName>
        <fullName>UDP-N-acetylglucosamine-1-phosphotransferase subunits alpha/beta</fullName>
    </alternativeName>
    <component>
        <recommendedName>
            <fullName>N-acetylglucosamine-1-phosphotransferase subunit alpha</fullName>
        </recommendedName>
    </component>
    <component>
        <recommendedName>
            <fullName>N-acetylglucosamine-1-phosphotransferase subunit beta</fullName>
        </recommendedName>
    </component>
</protein>
<dbReference type="EC" id="2.7.8.17" evidence="17"/>
<dbReference type="EMBL" id="AM085438">
    <property type="protein sequence ID" value="CAJ30014.1"/>
    <property type="molecule type" value="mRNA"/>
</dbReference>
<dbReference type="EMBL" id="AY687932">
    <property type="protein sequence ID" value="AAV98624.1"/>
    <property type="molecule type" value="mRNA"/>
</dbReference>
<dbReference type="EMBL" id="BC071687">
    <property type="protein sequence ID" value="AAH71687.1"/>
    <property type="molecule type" value="mRNA"/>
</dbReference>
<dbReference type="EMBL" id="BC042615">
    <property type="protein sequence ID" value="AAH42615.1"/>
    <property type="molecule type" value="mRNA"/>
</dbReference>
<dbReference type="EMBL" id="BC131787">
    <property type="protein sequence ID" value="AAI31788.1"/>
    <property type="molecule type" value="mRNA"/>
</dbReference>
<dbReference type="EMBL" id="AK056137">
    <property type="protein sequence ID" value="BAB71102.1"/>
    <property type="molecule type" value="mRNA"/>
</dbReference>
<dbReference type="EMBL" id="AB033034">
    <property type="protein sequence ID" value="BAA86522.2"/>
    <property type="molecule type" value="mRNA"/>
</dbReference>
<dbReference type="CCDS" id="CCDS9088.1">
    <molecule id="Q3T906-1"/>
</dbReference>
<dbReference type="RefSeq" id="NP_077288.2">
    <molecule id="Q3T906-1"/>
    <property type="nucleotide sequence ID" value="NM_024312.4"/>
</dbReference>
<dbReference type="PDB" id="2N6D">
    <property type="method" value="NMR"/>
    <property type="chains" value="A=135-305"/>
</dbReference>
<dbReference type="PDB" id="7S05">
    <property type="method" value="EM"/>
    <property type="resolution" value="3.10 A"/>
    <property type="chains" value="A/B=44-1209"/>
</dbReference>
<dbReference type="PDB" id="7S06">
    <property type="method" value="EM"/>
    <property type="resolution" value="3.30 A"/>
    <property type="chains" value="A/B=44-1209"/>
</dbReference>
<dbReference type="PDB" id="9BGF">
    <property type="method" value="EM"/>
    <property type="resolution" value="2.90 A"/>
    <property type="chains" value="A/B=44-1209"/>
</dbReference>
<dbReference type="PDB" id="9BGG">
    <property type="method" value="EM"/>
    <property type="resolution" value="3.40 A"/>
    <property type="chains" value="A/B=867-1209"/>
</dbReference>
<dbReference type="PDBsum" id="2N6D"/>
<dbReference type="PDBsum" id="7S05"/>
<dbReference type="PDBsum" id="7S06"/>
<dbReference type="PDBsum" id="9BGF"/>
<dbReference type="PDBsum" id="9BGG"/>
<dbReference type="BMRB" id="Q3T906"/>
<dbReference type="EMDB" id="EMD-24784"/>
<dbReference type="EMDB" id="EMD-24785"/>
<dbReference type="EMDB" id="EMD-44511"/>
<dbReference type="EMDB" id="EMD-44512"/>
<dbReference type="SMR" id="Q3T906"/>
<dbReference type="BioGRID" id="122576">
    <property type="interactions" value="55"/>
</dbReference>
<dbReference type="ComplexPortal" id="CPX-6841">
    <property type="entry name" value="N-acetylglucosamine-1-phosphotransferase complex"/>
</dbReference>
<dbReference type="FunCoup" id="Q3T906">
    <property type="interactions" value="1347"/>
</dbReference>
<dbReference type="IntAct" id="Q3T906">
    <property type="interactions" value="43"/>
</dbReference>
<dbReference type="MINT" id="Q3T906"/>
<dbReference type="STRING" id="9606.ENSP00000299314"/>
<dbReference type="BindingDB" id="Q3T906"/>
<dbReference type="CarbonylDB" id="Q3T906"/>
<dbReference type="GlyConnect" id="1532">
    <property type="glycosylation" value="7 N-Linked glycans (5 sites)"/>
</dbReference>
<dbReference type="GlyCosmos" id="Q3T906">
    <property type="glycosylation" value="15 sites, 7 glycans"/>
</dbReference>
<dbReference type="GlyGen" id="Q3T906">
    <property type="glycosylation" value="38 sites, 21 N-linked glycans (13 sites), 3 O-linked glycans (16 sites)"/>
</dbReference>
<dbReference type="iPTMnet" id="Q3T906"/>
<dbReference type="PhosphoSitePlus" id="Q3T906"/>
<dbReference type="SwissPalm" id="Q3T906"/>
<dbReference type="BioMuta" id="GNPTAB"/>
<dbReference type="DMDM" id="90185244"/>
<dbReference type="CPTAC" id="CPTAC-2218"/>
<dbReference type="jPOST" id="Q3T906"/>
<dbReference type="MassIVE" id="Q3T906"/>
<dbReference type="PaxDb" id="9606-ENSP00000299314"/>
<dbReference type="PeptideAtlas" id="Q3T906"/>
<dbReference type="ProteomicsDB" id="61878">
    <molecule id="Q3T906-1"/>
</dbReference>
<dbReference type="ProteomicsDB" id="61879">
    <molecule id="Q3T906-2"/>
</dbReference>
<dbReference type="Pumba" id="Q3T906"/>
<dbReference type="Antibodypedia" id="44958">
    <property type="antibodies" value="74 antibodies from 16 providers"/>
</dbReference>
<dbReference type="DNASU" id="79158"/>
<dbReference type="Ensembl" id="ENST00000299314.12">
    <molecule id="Q3T906-1"/>
    <property type="protein sequence ID" value="ENSP00000299314.7"/>
    <property type="gene ID" value="ENSG00000111670.16"/>
</dbReference>
<dbReference type="Ensembl" id="ENST00000549940.5">
    <molecule id="Q3T906-2"/>
    <property type="protein sequence ID" value="ENSP00000449150.1"/>
    <property type="gene ID" value="ENSG00000111670.16"/>
</dbReference>
<dbReference type="GeneID" id="79158"/>
<dbReference type="KEGG" id="hsa:79158"/>
<dbReference type="MANE-Select" id="ENST00000299314.12">
    <property type="protein sequence ID" value="ENSP00000299314.7"/>
    <property type="RefSeq nucleotide sequence ID" value="NM_024312.5"/>
    <property type="RefSeq protein sequence ID" value="NP_077288.2"/>
</dbReference>
<dbReference type="UCSC" id="uc001tit.4">
    <molecule id="Q3T906-1"/>
    <property type="organism name" value="human"/>
</dbReference>
<dbReference type="AGR" id="HGNC:29670"/>
<dbReference type="CTD" id="79158"/>
<dbReference type="DisGeNET" id="79158"/>
<dbReference type="GeneCards" id="GNPTAB"/>
<dbReference type="GeneReviews" id="GNPTAB"/>
<dbReference type="HGNC" id="HGNC:29670">
    <property type="gene designation" value="GNPTAB"/>
</dbReference>
<dbReference type="HPA" id="ENSG00000111670">
    <property type="expression patterns" value="Low tissue specificity"/>
</dbReference>
<dbReference type="MalaCards" id="GNPTAB"/>
<dbReference type="MIM" id="252500">
    <property type="type" value="phenotype"/>
</dbReference>
<dbReference type="MIM" id="252600">
    <property type="type" value="phenotype"/>
</dbReference>
<dbReference type="MIM" id="607840">
    <property type="type" value="gene"/>
</dbReference>
<dbReference type="neXtProt" id="NX_Q3T906"/>
<dbReference type="OpenTargets" id="ENSG00000111670"/>
<dbReference type="Orphanet" id="576">
    <property type="disease" value="Mucolipidosis type II"/>
</dbReference>
<dbReference type="Orphanet" id="423461">
    <property type="disease" value="Mucolipidosis type III alpha/beta"/>
</dbReference>
<dbReference type="PharmGKB" id="PA128394710"/>
<dbReference type="VEuPathDB" id="HostDB:ENSG00000111670"/>
<dbReference type="eggNOG" id="ENOG502QQMR">
    <property type="taxonomic scope" value="Eukaryota"/>
</dbReference>
<dbReference type="GeneTree" id="ENSGT00390000006747"/>
<dbReference type="HOGENOM" id="CLU_002469_0_0_1"/>
<dbReference type="InParanoid" id="Q3T906"/>
<dbReference type="OMA" id="MIDRVVM"/>
<dbReference type="OrthoDB" id="263283at2759"/>
<dbReference type="PAN-GO" id="Q3T906">
    <property type="GO annotations" value="4 GO annotations based on evolutionary models"/>
</dbReference>
<dbReference type="PhylomeDB" id="Q3T906"/>
<dbReference type="TreeFam" id="TF324175"/>
<dbReference type="BRENDA" id="2.7.8.17">
    <property type="organism ID" value="2681"/>
</dbReference>
<dbReference type="PathwayCommons" id="Q3T906"/>
<dbReference type="SignaLink" id="Q3T906"/>
<dbReference type="BioGRID-ORCS" id="79158">
    <property type="hits" value="29 hits in 1191 CRISPR screens"/>
</dbReference>
<dbReference type="ChiTaRS" id="GNPTAB">
    <property type="organism name" value="human"/>
</dbReference>
<dbReference type="GenomeRNAi" id="79158"/>
<dbReference type="Pharos" id="Q3T906">
    <property type="development level" value="Tbio"/>
</dbReference>
<dbReference type="PRO" id="PR:Q3T906"/>
<dbReference type="Proteomes" id="UP000005640">
    <property type="component" value="Chromosome 12"/>
</dbReference>
<dbReference type="RNAct" id="Q3T906">
    <property type="molecule type" value="protein"/>
</dbReference>
<dbReference type="Bgee" id="ENSG00000111670">
    <property type="expression patterns" value="Expressed in tibia and 199 other cell types or tissues"/>
</dbReference>
<dbReference type="ExpressionAtlas" id="Q3T906">
    <property type="expression patterns" value="baseline and differential"/>
</dbReference>
<dbReference type="GO" id="GO:0005794">
    <property type="term" value="C:Golgi apparatus"/>
    <property type="evidence" value="ECO:0000314"/>
    <property type="project" value="HPA"/>
</dbReference>
<dbReference type="GO" id="GO:0000139">
    <property type="term" value="C:Golgi membrane"/>
    <property type="evidence" value="ECO:0000314"/>
    <property type="project" value="UniProtKB"/>
</dbReference>
<dbReference type="GO" id="GO:0005509">
    <property type="term" value="F:calcium ion binding"/>
    <property type="evidence" value="ECO:0007669"/>
    <property type="project" value="InterPro"/>
</dbReference>
<dbReference type="GO" id="GO:0003976">
    <property type="term" value="F:UDP-N-acetylglucosamine-lysosomal-enzyme N-acetylglucosaminephosphotransferase activity"/>
    <property type="evidence" value="ECO:0000314"/>
    <property type="project" value="UniProtKB"/>
</dbReference>
<dbReference type="GO" id="GO:0046835">
    <property type="term" value="P:carbohydrate phosphorylation"/>
    <property type="evidence" value="ECO:0000314"/>
    <property type="project" value="UniProtKB"/>
</dbReference>
<dbReference type="GO" id="GO:0007040">
    <property type="term" value="P:lysosome organization"/>
    <property type="evidence" value="ECO:0000315"/>
    <property type="project" value="UniProtKB"/>
</dbReference>
<dbReference type="GO" id="GO:0016256">
    <property type="term" value="P:N-glycan processing to lysosome"/>
    <property type="evidence" value="ECO:0000315"/>
    <property type="project" value="UniProtKB"/>
</dbReference>
<dbReference type="GO" id="GO:0033299">
    <property type="term" value="P:secretion of lysosomal enzymes"/>
    <property type="evidence" value="ECO:0007669"/>
    <property type="project" value="Ensembl"/>
</dbReference>
<dbReference type="CDD" id="cd21599">
    <property type="entry name" value="RRM1_GNPTAB"/>
    <property type="match status" value="1"/>
</dbReference>
<dbReference type="CDD" id="cd21600">
    <property type="entry name" value="RRM2_GNPTAB"/>
    <property type="match status" value="1"/>
</dbReference>
<dbReference type="FunFam" id="3.30.300.320:FF:000002">
    <property type="entry name" value="N-acetylglucosamine-1-phosphotransferase subunits alpha/beta isoform X1"/>
    <property type="match status" value="1"/>
</dbReference>
<dbReference type="Gene3D" id="3.30.300.320">
    <property type="match status" value="1"/>
</dbReference>
<dbReference type="InterPro" id="IPR010506">
    <property type="entry name" value="DMAP1-bd"/>
</dbReference>
<dbReference type="InterPro" id="IPR018247">
    <property type="entry name" value="EF_Hand_1_Ca_BS"/>
</dbReference>
<dbReference type="InterPro" id="IPR002048">
    <property type="entry name" value="EF_hand_dom"/>
</dbReference>
<dbReference type="InterPro" id="IPR041536">
    <property type="entry name" value="GNPTAB_reg"/>
</dbReference>
<dbReference type="InterPro" id="IPR035993">
    <property type="entry name" value="Notch-like_dom_sf"/>
</dbReference>
<dbReference type="InterPro" id="IPR000800">
    <property type="entry name" value="Notch_dom"/>
</dbReference>
<dbReference type="InterPro" id="IPR047141">
    <property type="entry name" value="Stealth"/>
</dbReference>
<dbReference type="InterPro" id="IPR031358">
    <property type="entry name" value="Stealth_CR1"/>
</dbReference>
<dbReference type="InterPro" id="IPR021520">
    <property type="entry name" value="Stealth_CR2"/>
</dbReference>
<dbReference type="InterPro" id="IPR031357">
    <property type="entry name" value="Stealth_CR3"/>
</dbReference>
<dbReference type="InterPro" id="IPR031356">
    <property type="entry name" value="Stealth_CR4"/>
</dbReference>
<dbReference type="PANTHER" id="PTHR24045">
    <property type="match status" value="1"/>
</dbReference>
<dbReference type="PANTHER" id="PTHR24045:SF0">
    <property type="entry name" value="N-ACETYLGLUCOSAMINE-1-PHOSPHOTRANSFERASE SUBUNITS ALPHA_BETA"/>
    <property type="match status" value="1"/>
</dbReference>
<dbReference type="Pfam" id="PF06464">
    <property type="entry name" value="DMAP_binding"/>
    <property type="match status" value="1"/>
</dbReference>
<dbReference type="Pfam" id="PF18440">
    <property type="entry name" value="GlcNAc-1_reg"/>
    <property type="match status" value="1"/>
</dbReference>
<dbReference type="Pfam" id="PF00066">
    <property type="entry name" value="Notch"/>
    <property type="match status" value="2"/>
</dbReference>
<dbReference type="Pfam" id="PF17101">
    <property type="entry name" value="Stealth_CR1"/>
    <property type="match status" value="1"/>
</dbReference>
<dbReference type="Pfam" id="PF11380">
    <property type="entry name" value="Stealth_CR2"/>
    <property type="match status" value="1"/>
</dbReference>
<dbReference type="Pfam" id="PF17102">
    <property type="entry name" value="Stealth_CR3"/>
    <property type="match status" value="1"/>
</dbReference>
<dbReference type="Pfam" id="PF17103">
    <property type="entry name" value="Stealth_CR4"/>
    <property type="match status" value="1"/>
</dbReference>
<dbReference type="SMART" id="SM01137">
    <property type="entry name" value="DMAP_binding"/>
    <property type="match status" value="1"/>
</dbReference>
<dbReference type="SMART" id="SM00004">
    <property type="entry name" value="NL"/>
    <property type="match status" value="2"/>
</dbReference>
<dbReference type="SUPFAM" id="SSF90193">
    <property type="entry name" value="Notch domain"/>
    <property type="match status" value="1"/>
</dbReference>
<dbReference type="PROSITE" id="PS51912">
    <property type="entry name" value="DMAP1_BIND"/>
    <property type="match status" value="1"/>
</dbReference>
<dbReference type="PROSITE" id="PS00018">
    <property type="entry name" value="EF_HAND_1"/>
    <property type="match status" value="1"/>
</dbReference>
<dbReference type="PROSITE" id="PS50222">
    <property type="entry name" value="EF_HAND_2"/>
    <property type="match status" value="1"/>
</dbReference>
<dbReference type="PROSITE" id="PS50258">
    <property type="entry name" value="LNR"/>
    <property type="match status" value="2"/>
</dbReference>
<organism>
    <name type="scientific">Homo sapiens</name>
    <name type="common">Human</name>
    <dbReference type="NCBI Taxonomy" id="9606"/>
    <lineage>
        <taxon>Eukaryota</taxon>
        <taxon>Metazoa</taxon>
        <taxon>Chordata</taxon>
        <taxon>Craniata</taxon>
        <taxon>Vertebrata</taxon>
        <taxon>Euteleostomi</taxon>
        <taxon>Mammalia</taxon>
        <taxon>Eutheria</taxon>
        <taxon>Euarchontoglires</taxon>
        <taxon>Primates</taxon>
        <taxon>Haplorrhini</taxon>
        <taxon>Catarrhini</taxon>
        <taxon>Hominidae</taxon>
        <taxon>Homo</taxon>
    </lineage>
</organism>
<reference key="1">
    <citation type="journal article" date="2005" name="Nat. Med.">
        <title>Mucolipidosis II is caused by mutations in GNPTA encoding the alpha/beta GlcNAc-1-phosphotransferase.</title>
        <authorList>
            <person name="Tiede S."/>
            <person name="Storch S."/>
            <person name="Luebke T."/>
            <person name="Henrissat B."/>
            <person name="Bargal R."/>
            <person name="Raas-Rothschild A."/>
            <person name="Braulke T."/>
        </authorList>
    </citation>
    <scope>NUCLEOTIDE SEQUENCE [MRNA] (ISOFORM 1)</scope>
    <scope>SUBCELLULAR LOCATION</scope>
    <scope>INVOLVEMENT IN MLII</scope>
</reference>
<reference key="2">
    <citation type="journal article" date="2005" name="J. Biol. Chem.">
        <title>The alpha- and beta-subunits of the human UDP-N-acetylglucosamine:lysosomal enzyme N-acetylglucosamine-1-phosphotransferase are encoded by a single cDNA.</title>
        <authorList>
            <person name="Kudo M."/>
            <person name="Bao M."/>
            <person name="D'Souza A."/>
            <person name="Ying F."/>
            <person name="Pan H."/>
            <person name="Roe B.A."/>
            <person name="Canfield W.M."/>
        </authorList>
    </citation>
    <scope>NUCLEOTIDE SEQUENCE [MRNA] (ISOFORM 1)</scope>
    <scope>TISSUE SPECIFICITY</scope>
    <scope>SUBCELLULAR LOCATION</scope>
</reference>
<reference key="3">
    <citation type="journal article" date="2005" name="J. Biol. Chem.">
        <authorList>
            <person name="Kudo M."/>
            <person name="Bao M."/>
            <person name="D'Souza A."/>
            <person name="Ying F."/>
            <person name="Pan H."/>
            <person name="Roe B.A."/>
            <person name="Canfield W.M."/>
        </authorList>
    </citation>
    <scope>ERRATUM OF PUBMED:16120602</scope>
</reference>
<reference key="4">
    <citation type="journal article" date="2004" name="Genome Res.">
        <title>The status, quality, and expansion of the NIH full-length cDNA project: the Mammalian Gene Collection (MGC).</title>
        <authorList>
            <consortium name="The MGC Project Team"/>
        </authorList>
    </citation>
    <scope>NUCLEOTIDE SEQUENCE [LARGE SCALE MRNA] (ISOFORMS 1 AND 2)</scope>
    <source>
        <tissue>Liver</tissue>
    </source>
</reference>
<reference key="5">
    <citation type="journal article" date="2004" name="Nat. Genet.">
        <title>Complete sequencing and characterization of 21,243 full-length human cDNAs.</title>
        <authorList>
            <person name="Ota T."/>
            <person name="Suzuki Y."/>
            <person name="Nishikawa T."/>
            <person name="Otsuki T."/>
            <person name="Sugiyama T."/>
            <person name="Irie R."/>
            <person name="Wakamatsu A."/>
            <person name="Hayashi K."/>
            <person name="Sato H."/>
            <person name="Nagai K."/>
            <person name="Kimura K."/>
            <person name="Makita H."/>
            <person name="Sekine M."/>
            <person name="Obayashi M."/>
            <person name="Nishi T."/>
            <person name="Shibahara T."/>
            <person name="Tanaka T."/>
            <person name="Ishii S."/>
            <person name="Yamamoto J."/>
            <person name="Saito K."/>
            <person name="Kawai Y."/>
            <person name="Isono Y."/>
            <person name="Nakamura Y."/>
            <person name="Nagahari K."/>
            <person name="Murakami K."/>
            <person name="Yasuda T."/>
            <person name="Iwayanagi T."/>
            <person name="Wagatsuma M."/>
            <person name="Shiratori A."/>
            <person name="Sudo H."/>
            <person name="Hosoiri T."/>
            <person name="Kaku Y."/>
            <person name="Kodaira H."/>
            <person name="Kondo H."/>
            <person name="Sugawara M."/>
            <person name="Takahashi M."/>
            <person name="Kanda K."/>
            <person name="Yokoi T."/>
            <person name="Furuya T."/>
            <person name="Kikkawa E."/>
            <person name="Omura Y."/>
            <person name="Abe K."/>
            <person name="Kamihara K."/>
            <person name="Katsuta N."/>
            <person name="Sato K."/>
            <person name="Tanikawa M."/>
            <person name="Yamazaki M."/>
            <person name="Ninomiya K."/>
            <person name="Ishibashi T."/>
            <person name="Yamashita H."/>
            <person name="Murakawa K."/>
            <person name="Fujimori K."/>
            <person name="Tanai H."/>
            <person name="Kimata M."/>
            <person name="Watanabe M."/>
            <person name="Hiraoka S."/>
            <person name="Chiba Y."/>
            <person name="Ishida S."/>
            <person name="Ono Y."/>
            <person name="Takiguchi S."/>
            <person name="Watanabe S."/>
            <person name="Yosida M."/>
            <person name="Hotuta T."/>
            <person name="Kusano J."/>
            <person name="Kanehori K."/>
            <person name="Takahashi-Fujii A."/>
            <person name="Hara H."/>
            <person name="Tanase T.-O."/>
            <person name="Nomura Y."/>
            <person name="Togiya S."/>
            <person name="Komai F."/>
            <person name="Hara R."/>
            <person name="Takeuchi K."/>
            <person name="Arita M."/>
            <person name="Imose N."/>
            <person name="Musashino K."/>
            <person name="Yuuki H."/>
            <person name="Oshima A."/>
            <person name="Sasaki N."/>
            <person name="Aotsuka S."/>
            <person name="Yoshikawa Y."/>
            <person name="Matsunawa H."/>
            <person name="Ichihara T."/>
            <person name="Shiohata N."/>
            <person name="Sano S."/>
            <person name="Moriya S."/>
            <person name="Momiyama H."/>
            <person name="Satoh N."/>
            <person name="Takami S."/>
            <person name="Terashima Y."/>
            <person name="Suzuki O."/>
            <person name="Nakagawa S."/>
            <person name="Senoh A."/>
            <person name="Mizoguchi H."/>
            <person name="Goto Y."/>
            <person name="Shimizu F."/>
            <person name="Wakebe H."/>
            <person name="Hishigaki H."/>
            <person name="Watanabe T."/>
            <person name="Sugiyama A."/>
            <person name="Takemoto M."/>
            <person name="Kawakami B."/>
            <person name="Yamazaki M."/>
            <person name="Watanabe K."/>
            <person name="Kumagai A."/>
            <person name="Itakura S."/>
            <person name="Fukuzumi Y."/>
            <person name="Fujimori Y."/>
            <person name="Komiyama M."/>
            <person name="Tashiro H."/>
            <person name="Tanigami A."/>
            <person name="Fujiwara T."/>
            <person name="Ono T."/>
            <person name="Yamada K."/>
            <person name="Fujii Y."/>
            <person name="Ozaki K."/>
            <person name="Hirao M."/>
            <person name="Ohmori Y."/>
            <person name="Kawabata A."/>
            <person name="Hikiji T."/>
            <person name="Kobatake N."/>
            <person name="Inagaki H."/>
            <person name="Ikema Y."/>
            <person name="Okamoto S."/>
            <person name="Okitani R."/>
            <person name="Kawakami T."/>
            <person name="Noguchi S."/>
            <person name="Itoh T."/>
            <person name="Shigeta K."/>
            <person name="Senba T."/>
            <person name="Matsumura K."/>
            <person name="Nakajima Y."/>
            <person name="Mizuno T."/>
            <person name="Morinaga M."/>
            <person name="Sasaki M."/>
            <person name="Togashi T."/>
            <person name="Oyama M."/>
            <person name="Hata H."/>
            <person name="Watanabe M."/>
            <person name="Komatsu T."/>
            <person name="Mizushima-Sugano J."/>
            <person name="Satoh T."/>
            <person name="Shirai Y."/>
            <person name="Takahashi Y."/>
            <person name="Nakagawa K."/>
            <person name="Okumura K."/>
            <person name="Nagase T."/>
            <person name="Nomura N."/>
            <person name="Kikuchi H."/>
            <person name="Masuho Y."/>
            <person name="Yamashita R."/>
            <person name="Nakai K."/>
            <person name="Yada T."/>
            <person name="Nakamura Y."/>
            <person name="Ohara O."/>
            <person name="Isogai T."/>
            <person name="Sugano S."/>
        </authorList>
    </citation>
    <scope>NUCLEOTIDE SEQUENCE [LARGE SCALE MRNA] OF 1-847 (ISOFORM 1)</scope>
</reference>
<reference key="6">
    <citation type="journal article" date="1999" name="DNA Res.">
        <title>Prediction of the coding sequences of unidentified human genes. XV. The complete sequences of 100 new cDNA clones from brain which code for large proteins in vitro.</title>
        <authorList>
            <person name="Nagase T."/>
            <person name="Ishikawa K."/>
            <person name="Kikuno R."/>
            <person name="Hirosawa M."/>
            <person name="Nomura N."/>
            <person name="Ohara O."/>
        </authorList>
    </citation>
    <scope>NUCLEOTIDE SEQUENCE [LARGE SCALE MRNA] OF 307-1256 (ISOFORM 1)</scope>
    <source>
        <tissue>Brain</tissue>
    </source>
</reference>
<reference key="7">
    <citation type="journal article" date="2002" name="DNA Res.">
        <title>Construction of expression-ready cDNA clones for KIAA genes: manual curation of 330 KIAA cDNA clones.</title>
        <authorList>
            <person name="Nakajima D."/>
            <person name="Okazaki N."/>
            <person name="Yamakawa H."/>
            <person name="Kikuno R."/>
            <person name="Ohara O."/>
            <person name="Nagase T."/>
        </authorList>
    </citation>
    <scope>SEQUENCE REVISION</scope>
</reference>
<reference key="8">
    <citation type="journal article" date="2005" name="PLoS Comput. Biol.">
        <title>Stealth proteins: in silico identification of a novel protein family rendering bacterial pathogens invisible to host immune defense.</title>
        <authorList>
            <person name="Sperisen P."/>
            <person name="Schmid C.D."/>
            <person name="Bucher P."/>
            <person name="Zilian O."/>
        </authorList>
    </citation>
    <scope>IDENTIFICATION AS A STEALTH PROTEIN</scope>
    <scope>PUTATIVE FUNCTION</scope>
</reference>
<reference key="9">
    <citation type="journal article" date="2009" name="J. Proteome Res.">
        <title>Glycoproteomics analysis of human liver tissue by combination of multiple enzyme digestion and hydrazide chemistry.</title>
        <authorList>
            <person name="Chen R."/>
            <person name="Jiang X."/>
            <person name="Sun D."/>
            <person name="Han G."/>
            <person name="Wang F."/>
            <person name="Ye M."/>
            <person name="Wang L."/>
            <person name="Zou H."/>
        </authorList>
    </citation>
    <scope>GLYCOSYLATION [LARGE SCALE ANALYSIS] AT ASN-699</scope>
    <source>
        <tissue>Liver</tissue>
    </source>
</reference>
<reference key="10">
    <citation type="journal article" date="2010" name="J. Biol. Chem.">
        <title>Functions of the alpha, beta, and gamma subunits of UDP-GlcNAc:lysosomal enzyme N-acetylglucosamine-1-phosphotransferase.</title>
        <authorList>
            <person name="Qian Y."/>
            <person name="Lee I."/>
            <person name="Lee W.S."/>
            <person name="Qian M."/>
            <person name="Kudo M."/>
            <person name="Canfield W.M."/>
            <person name="Lobel P."/>
            <person name="Kornfeld S."/>
        </authorList>
    </citation>
    <scope>FUNCTION</scope>
    <scope>CATALYTIC ACTIVITY</scope>
    <scope>SUBUNIT</scope>
</reference>
<reference key="11">
    <citation type="journal article" date="2011" name="Science">
        <title>A key enzyme in the biogenesis of lysosomes is a protease that regulates cholesterol metabolism.</title>
        <authorList>
            <person name="Marschner K."/>
            <person name="Kollmann K."/>
            <person name="Schweizer M."/>
            <person name="Braulke T."/>
            <person name="Pohl S."/>
        </authorList>
    </citation>
    <scope>PROTEOLYTIC PROCESSING</scope>
    <scope>SUBCELLULAR LOCATION</scope>
    <scope>GLYCOSYLATION</scope>
    <scope>MUTAGENESIS OF ARG-925; LEU-927 AND LYS-928</scope>
</reference>
<reference key="12">
    <citation type="journal article" date="2013" name="Genomics">
        <title>Two homozygous nonsense mutations of GNPTAB gene in two Chinese families with mucolipidosis II alpha/beta using targeted next-generation sequencing.</title>
        <authorList>
            <person name="Yang Y."/>
            <person name="Wu J."/>
            <person name="Liu H."/>
            <person name="Chen X."/>
            <person name="Wang Y."/>
            <person name="Zhao M."/>
            <person name="He X."/>
        </authorList>
    </citation>
    <scope>INVOLVEMENT IN MLII</scope>
</reference>
<reference key="13">
    <citation type="journal article" date="2022" name="Science">
        <title>The human disease gene LYSET is essential for lysosomal enzyme transport and viral infection.</title>
        <authorList>
            <person name="Richards C.M."/>
            <person name="Jabs S."/>
            <person name="Qiao W."/>
            <person name="Varanese L.D."/>
            <person name="Schweizer M."/>
            <person name="Mosen P.R."/>
            <person name="Riley N.M."/>
            <person name="Kluessendorf M."/>
            <person name="Zengel J.R."/>
            <person name="Flynn R.A."/>
            <person name="Rustagi A."/>
            <person name="Widen J.C."/>
            <person name="Peters C.E."/>
            <person name="Ooi Y.S."/>
            <person name="Xie X."/>
            <person name="Shi P.Y."/>
            <person name="Bartenschlager R."/>
            <person name="Puschnik A.S."/>
            <person name="Bogyo M."/>
            <person name="Bertozzi C.R."/>
            <person name="Blish C.A."/>
            <person name="Winter D."/>
            <person name="Nagamine C.M."/>
            <person name="Braulke T."/>
            <person name="Carette J.E."/>
        </authorList>
    </citation>
    <scope>INTERACTION WITH LYSET</scope>
</reference>
<reference key="14">
    <citation type="journal article" date="2014" name="Proc. Natl. Acad. Sci. U.S.A.">
        <title>Mislocalization of phosphotransferase as a cause of mucolipidosis III alphabeta.</title>
        <authorList>
            <person name="van Meel E."/>
            <person name="Qian Y."/>
            <person name="Kornfeld S.A."/>
        </authorList>
    </citation>
    <scope>CHARACTERIZATION OF VARIANTS MLIIIA GLN-4 AND TYR-15</scope>
</reference>
<reference key="15">
    <citation type="journal article" date="2015" name="J. Biol. Chem.">
        <title>Analysis of mucolipidosis II/III GNPTAB missense mutations identifies domains of UDP-GlcNAc:lysosomal enzyme GlcNAc-1-phosphotransferase involved in catalytic function and lysosomal enzyme recognition.</title>
        <authorList>
            <person name="Qian Y."/>
            <person name="van Meel E."/>
            <person name="Flanagan-Steet H."/>
            <person name="Yox A."/>
            <person name="Steet R."/>
            <person name="Kornfeld S."/>
        </authorList>
    </citation>
    <scope>CHARACTERIZATION OF VARIANTS MLII LEU-81; ASP-182; PRO-205; LEU-334; LEU-348; LEU-374; ASN-732; ARG-928; VAL-955; CYS-986; PRO-1001; VAL-1054 AND MET-1236</scope>
    <scope>CHARACTERIZATION OF VARIANTS MLIIIA GLN-4; TYR-15; VAL-190; GLN-334; PHE-399; THR-403; ALA-407; TYR-442; GLY-461; SER-468; TYR-505; PRO-587; PRO-926; TYR-956; GLY-1018 AND SER-1153</scope>
    <scope>CHARACTERIZATION OF VARIANTS ARG-523; THR-592 AND TRP-785</scope>
</reference>
<reference key="16">
    <citation type="journal article" date="2005" name="Am. J. Med. Genet. A">
        <title>Missense mutations in N-acetylglucosamine-1-phosphotransferase alpha/beta subunit gene in a patient with mucolipidosis III and a mild clinical phenotype.</title>
        <authorList>
            <person name="Tiede S."/>
            <person name="Muschol N."/>
            <person name="Reutter G."/>
            <person name="Cantz M."/>
            <person name="Ullrich K."/>
            <person name="Braulke T."/>
        </authorList>
    </citation>
    <scope>VARIANT MLIIIA ALA-407</scope>
    <scope>VARIANT GLY-662</scope>
</reference>
<reference key="17">
    <citation type="journal article" date="2006" name="Am. J. Hum. Genet.">
        <title>Mucolipidosis II (I-cell disease) and mucolipidosis IIIA (classical pseudo-Hurler polydystrophy) are caused by mutations in the GlcNAc-phosphotransferase alpha/beta-subunits precursor gene.</title>
        <authorList>
            <person name="Kudo M."/>
            <person name="Brem M.S."/>
            <person name="Canfield W.M."/>
        </authorList>
    </citation>
    <scope>VARIANT MLIIIA GLN-4</scope>
</reference>
<reference key="18">
    <citation type="journal article" date="2006" name="Hum. Mutat.">
        <title>Missense mutation in the N-acetylglucosamine-1-phosphotransferase gene (GNPTA) in a patient with mucolipidosis II induces changes in the size and cellular distribution of GNPTG.</title>
        <authorList>
            <person name="Tiede S."/>
            <person name="Cantz M."/>
            <person name="Spranger J."/>
            <person name="Braulke T."/>
        </authorList>
    </citation>
    <scope>VARIANT MLII MET-1236</scope>
</reference>
<reference key="19">
    <citation type="journal article" date="2006" name="Mol. Genet. Metab.">
        <title>When Mucolipidosis III meets Mucolipidosis II: GNPTA gene mutations in 24 patients.</title>
        <authorList>
            <person name="Bargal R."/>
            <person name="Zeigler M."/>
            <person name="Abu-Libdeh B."/>
            <person name="Zuri V."/>
            <person name="Mandel H."/>
            <person name="Ben Neriah Z."/>
            <person name="Stewart F."/>
            <person name="Elcioglu N."/>
            <person name="Hindi T."/>
            <person name="Le Merrer M."/>
            <person name="Bach G."/>
            <person name="Raas-Rothschild A."/>
        </authorList>
    </citation>
    <scope>VARIANT MLIIIA PHE-399</scope>
</reference>
<reference key="20">
    <citation type="journal article" date="2007" name="Clin. Chim. Acta">
        <title>DNA-based diagnosis of mucolipidosis type IIIA and mucopolysacchariodisis type VI in a Chinese family: a chance of 1 in 7.6 trillion.</title>
        <authorList>
            <person name="Lam C.W."/>
            <person name="Yan M.S."/>
            <person name="Li C.K."/>
            <person name="Lau K.C."/>
            <person name="Tong S.F."/>
            <person name="Tang H.Y."/>
        </authorList>
    </citation>
    <scope>VARIANT MLIIIA PRO-587</scope>
</reference>
<reference key="21">
    <citation type="journal article" date="2009" name="Am. J. Med. Genet. A">
        <title>Molecular analysis of cell lines from patients with mucolipidosis II and mucolipidosis III.</title>
        <authorList>
            <person name="Zarghooni M."/>
            <person name="Dittakavi S.S."/>
        </authorList>
    </citation>
    <scope>VARIANTS MLII ASP-182; PRO-205; ASN-732; ARG-928; VAL-955 AND VAL-1054</scope>
    <scope>VARIANT MLIIIA GLN-4</scope>
    <scope>CHARACTERIZATION OF VARIANT MLIIIA GLN-4</scope>
</reference>
<reference key="22">
    <citation type="journal article" date="2009" name="Hum. Mutat.">
        <title>Molecular characterization of 22 novel UDP-N-acetylglucosamine-1-phosphate transferase alpha- and beta-subunit (GNPTAB) gene mutations causing mucolipidosis types IIalpha/beta and IIIalpha/beta in 46 patients.</title>
        <authorList>
            <person name="Tappino B."/>
            <person name="Chuzhanova N.A."/>
            <person name="Regis S."/>
            <person name="Dardis A."/>
            <person name="Corsolini F."/>
            <person name="Stroppiano M."/>
            <person name="Tonoli E."/>
            <person name="Beccari T."/>
            <person name="Rosano C."/>
            <person name="Mucha J."/>
            <person name="Blanco M."/>
            <person name="Szlago M."/>
            <person name="Di Rocco M."/>
            <person name="Cooper D.N."/>
            <person name="Filocamo M."/>
        </authorList>
    </citation>
    <scope>VARIANTS MLIIIA THR-403; TYR-442; GLY-461 AND PRO-926</scope>
    <scope>VARIANT MLII PRO-1001</scope>
</reference>
<reference key="23">
    <citation type="journal article" date="2009" name="J. Hum. Genet.">
        <title>Mucolipidosis II and III alpha/beta: mutation analysis of 40 Japanese patients showed genotype-phenotype correlation.</title>
        <authorList>
            <person name="Otomo T."/>
            <person name="Muramatsu T."/>
            <person name="Yorifuji T."/>
            <person name="Okuyama T."/>
            <person name="Nakabayashi H."/>
            <person name="Fukao T."/>
            <person name="Ohura T."/>
            <person name="Yoshino M."/>
            <person name="Tanaka A."/>
            <person name="Okamoto N."/>
            <person name="Inui K."/>
            <person name="Ozono K."/>
            <person name="Sakai N."/>
        </authorList>
    </citation>
    <scope>VARIANTS MLII LEU-334 AND LEU-374</scope>
    <scope>VARIANTS MLIIIA LEU-374; TYR-956 AND SER-1153</scope>
</reference>
<reference key="24">
    <citation type="journal article" date="2010" name="J. Med. Genet.">
        <title>Phenotype and genotype in mucolipidoses II and III alpha/beta: a study of 61 probands.</title>
        <authorList>
            <person name="Cathey S.S."/>
            <person name="Leroy J.G."/>
            <person name="Wood T."/>
            <person name="Eaves K."/>
            <person name="Simensen R.J."/>
            <person name="Kudo M."/>
            <person name="Stevenson R.E."/>
            <person name="Friez M.J."/>
        </authorList>
    </citation>
    <scope>VARIANTS MLIIIA GLN-4; TYR-15; VAL-190; GLN-334; PHE-399; SER-468; TYR-505; ARG-956 AND GLY-1018</scope>
    <scope>VARIANT MLII LEU-348</scope>
</reference>
<reference key="25">
    <citation type="journal article" date="2010" name="N. Engl. J. Med.">
        <title>Mutations in the lysosomal enzyme-targeting pathway and persistent stuttering.</title>
        <authorList>
            <person name="Kang C."/>
            <person name="Riazuddin S."/>
            <person name="Mundorff J."/>
            <person name="Krasnewich D."/>
            <person name="Friedman P."/>
            <person name="Mullikin J.C."/>
            <person name="Drayna D."/>
        </authorList>
    </citation>
    <scope>VARIANTS SER-455; LEU-625 AND LYS-1200</scope>
    <scope>POSSIBLE INVOLVEMENT IN PERSISTENT STUTTERING</scope>
</reference>
<reference key="26">
    <citation type="journal article" date="2012" name="Am. J. Med. Genet. A">
        <title>Mucolipidosis type II alpha/beta with a homozygous missense mutation in the GNPTAB gene.</title>
        <authorList>
            <person name="Coutinho M.F."/>
            <person name="Santos L.S."/>
            <person name="Girisha K.M."/>
            <person name="Satyamoorthy K."/>
            <person name="Lacerda L."/>
            <person name="Prata M.J."/>
            <person name="Alves S."/>
        </authorList>
    </citation>
    <scope>VARIANT MLII CYS-986</scope>
</reference>
<reference key="27">
    <citation type="journal article" date="2014" name="Eur. J. Hum. Genet.">
        <title>A novel intermediate mucolipidosis II/IIIalphabeta caused by GNPTAB mutation in the cytosolic N-terminal domain.</title>
        <authorList>
            <person name="Leroy J.G."/>
            <person name="Sillence D."/>
            <person name="Wood T."/>
            <person name="Barnes J."/>
            <person name="Lebel R.R."/>
            <person name="Friez M.J."/>
            <person name="Stevenson R.E."/>
            <person name="Steet R."/>
            <person name="Cathey S.S."/>
        </authorList>
    </citation>
    <scope>VARIANT MLIIIA GLN-4</scope>
    <scope>CHARACTERIZATION OF VARIANT MLIIIA GLN-4</scope>
</reference>
<reference key="28">
    <citation type="journal article" date="2013" name="Gene">
        <title>Mucolipidosis II and III alpha/beta in Brazil: analysis of the GNPTAB gene.</title>
        <authorList>
            <person name="Cury G.K."/>
            <person name="Matte U."/>
            <person name="Artigalas O."/>
            <person name="Alegra T."/>
            <person name="Velho R.V."/>
            <person name="Sperb F."/>
            <person name="Burin M.G."/>
            <person name="Ribeiro E.M."/>
            <person name="Lourenco C.M."/>
            <person name="Kim C.A."/>
            <person name="Valadares E.R."/>
            <person name="Galera M.F."/>
            <person name="Acosta A.X."/>
            <person name="Schwartz I.V."/>
        </authorList>
    </citation>
    <scope>VARIANT MLII LEU-81</scope>
    <scope>VARIANTS MLIIIA PHE-399; THR-403 AND TYR-505</scope>
</reference>
<reference key="29">
    <citation type="journal article" date="2014" name="Hum. Mutat.">
        <title>Mucolipidosis II-related mutations inhibit the exit from the endoplasmic reticulum and proteolytic cleavage of GlcNAc-1-phosphotransferase precursor protein (GNPTAB).</title>
        <authorList>
            <person name="De Pace R."/>
            <person name="Coutinho M.F."/>
            <person name="Koch-Nolte F."/>
            <person name="Haag F."/>
            <person name="Prata M.J."/>
            <person name="Alves S."/>
            <person name="Braulke T."/>
            <person name="Pohl S."/>
        </authorList>
    </citation>
    <scope>VARIANTS MLII LEU-81; CYS-986 AND MET-1236</scope>
    <scope>VARIANT MLIIIA PHE-399</scope>
    <scope>CHARACTERIZATION OF VARIANTS MLII LEU-81; CYS-986 AND MET-1236</scope>
    <scope>CHARACTERIZATION OF VARIANT MLIIIA PHE-399</scope>
    <scope>SUBCELLULAR LOCATION</scope>
    <scope>PROTEOLYTIC PROCESSING</scope>
    <scope>GLYCOSYLATION</scope>
</reference>
<reference key="30">
    <citation type="journal article" date="2013" name="Proc. Natl. Acad. Sci. U.S.A.">
        <title>The DMAP interaction domain of UDP-GlcNAc:lysosomal enzyme N-acetylglucosamine-1-phosphotransferase is a substrate recognition module.</title>
        <authorList>
            <person name="Qian Y."/>
            <person name="Flanagan-Steet H."/>
            <person name="van Meel E."/>
            <person name="Steet R."/>
            <person name="Kornfeld S.A."/>
        </authorList>
    </citation>
    <scope>VARIANT MLII ASN-732</scope>
    <scope>CHARACTERIZATION OF VARIANT MLII ASN-732</scope>
    <scope>FUNCTION</scope>
    <scope>SUBCELLULAR LOCATION</scope>
</reference>
<reference key="31">
    <citation type="journal article" date="2014" name="Orphanet J. Rare Dis.">
        <title>Assessment of a targeted resequencing assay as a support tool in the diagnosis of lysosomal storage disorders.</title>
        <authorList>
            <person name="Fernandez-Marmiesse A."/>
            <person name="Morey M."/>
            <person name="Pineda M."/>
            <person name="Eiris J."/>
            <person name="Couce M.L."/>
            <person name="Castro-Gago M."/>
            <person name="Fraga J.M."/>
            <person name="Lacerda L."/>
            <person name="Gouveia S."/>
            <person name="Perez-Poyato M.S."/>
            <person name="Armstrong J."/>
            <person name="Castineiras D."/>
            <person name="Cocho J.A."/>
        </authorList>
    </citation>
    <scope>VARIANTS THR-592 AND TRP-785</scope>
</reference>
<reference key="32">
    <citation type="journal article" date="2015" name="Hum. Mol. Genet.">
        <title>Analyses of disease-related GNPTAB mutations define a novel GlcNAc-1-phosphotransferase interaction domain and an alternative site-1 protease cleavage site.</title>
        <authorList>
            <person name="Velho R.V."/>
            <person name="De Pace R."/>
            <person name="Kluender S."/>
            <person name="Sperb-Ludwig F."/>
            <person name="Lourenco C.M."/>
            <person name="Schwartz I.V."/>
            <person name="Braulke T."/>
            <person name="Pohl S."/>
        </authorList>
    </citation>
    <scope>VARIANTS MLIIIA MET-644 AND THR-1223 DEL</scope>
    <scope>CHARACTERIZATION OF VARIANTS MLIIIA PHE-399; THR-403; TYR-505; ARG-575; MET-644 AND THR-1223 DEL</scope>
    <scope>CHARACTERIZATION OF VARIANT MLII 937-TYR--MET-972 DEL</scope>
    <scope>MUTAGENESIS OF ILE-346 AND TRP-357</scope>
    <scope>SUBCELLULAR LOCATION</scope>
    <scope>PROTEOLYTIC CLEAVAGE</scope>
</reference>
<reference key="33">
    <citation type="journal article" date="2015" name="JIMD Rep.">
        <title>Dried blood spots allow targeted screening to diagnose mucopolysaccharidosis and mucolipidosis.</title>
        <authorList>
            <person name="Cobos P.N."/>
            <person name="Steglich C."/>
            <person name="Santer R."/>
            <person name="Lukacs Z."/>
            <person name="Gal A."/>
        </authorList>
    </citation>
    <scope>VARIANT MLII CYS-986</scope>
    <scope>VARIANT ARG-523</scope>
</reference>
<reference key="34">
    <citation type="journal article" date="2016" name="Nature">
        <title>Analysis of protein-coding genetic variation in 60,706 humans.</title>
        <authorList>
            <consortium name="Exome Aggregation Consortium"/>
            <person name="Lek M."/>
            <person name="Karczewski K.J."/>
            <person name="Minikel E.V."/>
            <person name="Samocha K.E."/>
            <person name="Banks E."/>
            <person name="Fennell T."/>
            <person name="O'Donnell-Luria A.H."/>
            <person name="Ware J.S."/>
            <person name="Hill A.J."/>
            <person name="Cummings B.B."/>
            <person name="Tukiainen T."/>
            <person name="Birnbaum D.P."/>
            <person name="Kosmicki J.A."/>
            <person name="Duncan L.E."/>
            <person name="Estrada K."/>
            <person name="Zhao F."/>
            <person name="Zou J."/>
            <person name="Pierce-Hoffman E."/>
            <person name="Berghout J."/>
            <person name="Cooper D.N."/>
            <person name="Deflaux N."/>
            <person name="DePristo M."/>
            <person name="Do R."/>
            <person name="Flannick J."/>
            <person name="Fromer M."/>
            <person name="Gauthier L."/>
            <person name="Goldstein J."/>
            <person name="Gupta N."/>
            <person name="Howrigan D."/>
            <person name="Kiezun A."/>
            <person name="Kurki M.I."/>
            <person name="Moonshine A.L."/>
            <person name="Natarajan P."/>
            <person name="Orozco L."/>
            <person name="Peloso G.M."/>
            <person name="Poplin R."/>
            <person name="Rivas M.A."/>
            <person name="Ruano-Rubio V."/>
            <person name="Rose S.A."/>
            <person name="Ruderfer D.M."/>
            <person name="Shakir K."/>
            <person name="Stenson P.D."/>
            <person name="Stevens C."/>
            <person name="Thomas B.P."/>
            <person name="Tiao G."/>
            <person name="Tusie-Luna M.T."/>
            <person name="Weisburd B."/>
            <person name="Won H.H."/>
            <person name="Yu D."/>
            <person name="Altshuler D.M."/>
            <person name="Ardissino D."/>
            <person name="Boehnke M."/>
            <person name="Danesh J."/>
            <person name="Donnelly S."/>
            <person name="Elosua R."/>
            <person name="Florez J.C."/>
            <person name="Gabriel S.B."/>
            <person name="Getz G."/>
            <person name="Glatt S.J."/>
            <person name="Hultman C.M."/>
            <person name="Kathiresan S."/>
            <person name="Laakso M."/>
            <person name="McCarroll S."/>
            <person name="McCarthy M.I."/>
            <person name="McGovern D."/>
            <person name="McPherson R."/>
            <person name="Neale B.M."/>
            <person name="Palotie A."/>
            <person name="Purcell S.M."/>
            <person name="Saleheen D."/>
            <person name="Scharf J.M."/>
            <person name="Sklar P."/>
            <person name="Sullivan P.F."/>
            <person name="Tuomilehto J."/>
            <person name="Tsuang M.T."/>
            <person name="Watkins H.C."/>
            <person name="Wilson J.G."/>
            <person name="Daly M.J."/>
            <person name="MacArthur D.G."/>
        </authorList>
    </citation>
    <scope>VARIANT LYS-1200</scope>
</reference>
<reference key="35">
    <citation type="journal article" date="2017" name="Int. J. Biochem. Cell Biol.">
        <title>GNPTAB missense mutations cause loss of GlcNAc-1-phosphotransferase activity in mucolipidosis type II through distinct mechanisms.</title>
        <authorList>
            <person name="Ludwig N.F."/>
            <person name="Velho R.V."/>
            <person name="Sperb-Ludwig F."/>
            <person name="Acosta A.X."/>
            <person name="Ribeiro E.M."/>
            <person name="Kim C.A."/>
            <person name="Gandelman Horovitz D.D."/>
            <person name="Boy R."/>
            <person name="Rodovalho-Doriqui M.J."/>
            <person name="Lourenco C.M."/>
            <person name="Santos E.S."/>
            <person name="Braulke T."/>
            <person name="Pohl S."/>
            <person name="Schwartz I.V.D."/>
        </authorList>
    </citation>
    <scope>VARIANTS MLII GLY-76; LEU-81; LEU-385 AND 1111-TYR--VAL-1256 DEL</scope>
    <scope>CHARACTERIZATION OF VARIANTS MLII GLY-76 AND LEU-385</scope>
    <scope>VARIANTS MLIIIA LEU-81; 278-GLN--VAL-1256 DEL; THR-403 AND TYR-505</scope>
    <scope>FUNCTION</scope>
    <scope>SUBCELLULAR LOCATION</scope>
    <scope>PROTEOLYTIC PROCESSING</scope>
</reference>
<comment type="function">
    <text evidence="17 22 32">Catalyzes the formation of mannose 6-phosphate (M6P) markers on high mannose type oligosaccharides in the Golgi apparatus. M6P residues are required to bind to the M6P receptors (MPR), which mediate the vesicular transport of lysosomal enzymes to the endosomal/prelysosomal compartment.</text>
</comment>
<comment type="catalytic activity">
    <reaction evidence="17">
        <text>N(4)-[alpha-D-mannosyl-(1-&gt;2)-alpha-D-mannosyl-(glycan)]-L-asparaginyl-[protein] + UDP-N-acetyl-alpha-D-glucosamine = N(4)-[6-(N-acetyl-alpha-D-glucosaminyl-1-phospho)-alpha-D-mannosyl-(1-&gt;2)-alpha-D-mannosyl-(glycan)]-L-asparaginyl-[protein] + UMP + H(+)</text>
        <dbReference type="Rhea" id="RHEA:13581"/>
        <dbReference type="Rhea" id="RHEA-COMP:14507"/>
        <dbReference type="Rhea" id="RHEA-COMP:14508"/>
        <dbReference type="ChEBI" id="CHEBI:15378"/>
        <dbReference type="ChEBI" id="CHEBI:57705"/>
        <dbReference type="ChEBI" id="CHEBI:57865"/>
        <dbReference type="ChEBI" id="CHEBI:140357"/>
        <dbReference type="ChEBI" id="CHEBI:140369"/>
        <dbReference type="EC" id="2.7.8.17"/>
    </reaction>
</comment>
<comment type="subunit">
    <text evidence="17 33">Hexamer of two alpha, two beta and two gamma (GNPTG) subunits; disulfide-linked. The alpha and/or the beta subunits of the enzyme constitute the catalytic subunits (PubMed:19955174). Interacts with LYSET; facilitates proper localization of GNPTAB (PubMed:36074821).</text>
</comment>
<comment type="interaction">
    <interactant intactId="EBI-1104907">
        <id>Q3T906</id>
    </interactant>
    <interactant intactId="EBI-8637627">
        <id>Q8WTP8</id>
        <label>AEN</label>
    </interactant>
    <organismsDiffer>false</organismsDiffer>
    <experiments>3</experiments>
</comment>
<comment type="interaction">
    <interactant intactId="EBI-1104907">
        <id>Q3T906</id>
    </interactant>
    <interactant intactId="EBI-3921705">
        <id>O43825</id>
        <label>B3GALT2</label>
    </interactant>
    <organismsDiffer>false</organismsDiffer>
    <experiments>3</experiments>
</comment>
<comment type="interaction">
    <interactant intactId="EBI-1104907">
        <id>Q3T906</id>
    </interactant>
    <interactant intactId="EBI-6658203">
        <id>Q86YD7</id>
        <label>FAM90A1</label>
    </interactant>
    <organismsDiffer>false</organismsDiffer>
    <experiments>3</experiments>
</comment>
<comment type="interaction">
    <interactant intactId="EBI-1104907">
        <id>Q3T906</id>
    </interactant>
    <interactant intactId="EBI-372067">
        <id>Q9UJJ9</id>
        <label>GNPTG</label>
    </interactant>
    <organismsDiffer>false</organismsDiffer>
    <experiments>6</experiments>
</comment>
<comment type="interaction">
    <interactant intactId="EBI-1104907">
        <id>Q3T906</id>
    </interactant>
    <interactant intactId="EBI-359352">
        <id>P25786</id>
        <label>PSMA1</label>
    </interactant>
    <organismsDiffer>false</organismsDiffer>
    <experiments>3</experiments>
</comment>
<comment type="interaction">
    <interactant intactId="EBI-1104907">
        <id>Q3T906</id>
    </interactant>
    <interactant intactId="EBI-745021">
        <id>Q96FJ0</id>
        <label>STAMBPL1</label>
    </interactant>
    <organismsDiffer>false</organismsDiffer>
    <experiments>3</experiments>
</comment>
<comment type="interaction">
    <interactant intactId="EBI-1104907">
        <id>Q3T906</id>
    </interactant>
    <interactant intactId="EBI-10177272">
        <id>P15622-3</id>
        <label>ZNF250</label>
    </interactant>
    <organismsDiffer>false</organismsDiffer>
    <experiments>3</experiments>
</comment>
<comment type="subcellular location">
    <molecule>N-acetylglucosamine-1-phosphotransferase subunit alpha</molecule>
    <subcellularLocation>
        <location evidence="6 7 19 22 25 30 32">Golgi apparatus membrane</location>
        <topology evidence="35">Single-pass type I membrane protein</topology>
    </subcellularLocation>
</comment>
<comment type="subcellular location">
    <molecule>N-acetylglucosamine-1-phosphotransferase subunit beta</molecule>
    <subcellularLocation>
        <location evidence="6 7 19 22 25 32">Golgi apparatus membrane</location>
        <topology evidence="35">Single-pass type II membrane protein</topology>
    </subcellularLocation>
</comment>
<comment type="alternative products">
    <event type="alternative splicing"/>
    <isoform>
        <id>Q3T906-1</id>
        <name>1</name>
        <sequence type="displayed"/>
    </isoform>
    <isoform>
        <id>Q3T906-2</id>
        <name>2</name>
        <sequence type="described" ref="VSP_017338 VSP_017339"/>
    </isoform>
</comment>
<comment type="tissue specificity">
    <text evidence="6">Expressed in the heart, whole brain, placenta, lung, liver, skeletal muscle, kidney and pancreas.</text>
</comment>
<comment type="domain">
    <text evidence="22">The DMAP1-binding domain mediates substrate recognition. It specifically recognizes a conformation-dependent protein determinant present in acid hydrolases (PubMed:23733939).</text>
</comment>
<comment type="PTM">
    <text evidence="19 25 30 32">The alpha- and beta-subunits are generated by a proteolytic cleavage by MBTPS1 protease at the Lys-928-Asp-929 bond.</text>
</comment>
<comment type="disease" evidence="7 10 13 14 15 16 20 21 22 23 25 28 29 30 32">
    <disease id="DI-01995">
        <name>Mucolipidosis type II</name>
        <acronym>MLII</acronym>
        <description>Fatal, autosomal recessive, lysosomal storage disorder characterized by severe clinical and radiologic features, peculiar fibroblast inclusions, and no excessive mucopolysacchariduria. Congenital dislocation of the hip, thoracic deformities, hernia, and hyperplastic gums are evident soon after birth.</description>
        <dbReference type="MIM" id="252500"/>
    </disease>
    <text>The disease is caused by variants affecting the gene represented in this entry.</text>
</comment>
<comment type="disease" evidence="5 8 9 11 13 14 15 16 21 24 25 26 29 30 32">
    <disease id="DI-01996">
        <name>Mucolipidosis type III complementation group A</name>
        <acronym>MLIIIA</acronym>
        <description>Autosomal recessive disease of lysosomal enzyme targeting. Clinically MLIII is characterized by restricted joint mobility, skeletal dysplasia, and short stature. Mildly coarsened facial features and thickening of the skin have been described. Cardiac valvular disease and corneal clouding may also occur. Half of the reported patients show learning disabilities or intellectual disability.</description>
        <dbReference type="MIM" id="252600"/>
    </disease>
    <text>The disease is caused by variants affecting the gene represented in this entry.</text>
</comment>
<comment type="disease">
    <text evidence="18">Genetic variations in GNPTAB have been suggested to play a role in susceptibility to persistent stuttering. Stuttering is a common speech disorder characterized by repetitions, prolongations, and interruptions in the flow of speech.</text>
</comment>
<comment type="miscellaneous">
    <text>Due to the low pH in the endosomal/prelysosomal compartment, the lysosomal enzyme-MPR complex dissociates and then the enzyme is delivered to the lysosome. Between 5% and 20% of newly synthesized lysosomal enzymes escape the binding to the MPR in the Golgi apparatus and are secreted.</text>
</comment>
<comment type="miscellaneous">
    <text>Stealth proteins are part of a protein family that is conserved from bacteria to higher eukaryotes. Family members were first identified in microbes as proteins that help pathogens to elude the host innate immune system. Microbial stealth proteins are most likely involved in the biosynthesis of exopolysaccharides. Stealth proteins are predicted to function as hexose-1-phosphoryltransferases.</text>
</comment>
<comment type="similarity">
    <text evidence="35">Belongs to the stealth family.</text>
</comment>
<accession>Q3T906</accession>
<accession>A2RRQ9</accession>
<accession>Q3ZQK2</accession>
<accession>Q6IPW5</accession>
<accession>Q86TQ2</accession>
<accession>Q96N13</accession>
<accession>Q9ULL2</accession>
<gene>
    <name type="primary">GNPTAB</name>
    <name type="synonym">GNPTA</name>
    <name type="synonym">KIAA1208</name>
</gene>